<feature type="transit peptide" description="Chloroplast" evidence="3">
    <location>
        <begin position="1"/>
        <end position="54"/>
    </location>
</feature>
<feature type="chain" id="PRO_0000007200" description="4-hydroxy-tetrahydrodipicolinate synthase, chloroplastic">
    <location>
        <begin position="55"/>
        <end position="380"/>
    </location>
</feature>
<feature type="region of interest" description="Disordered" evidence="2">
    <location>
        <begin position="1"/>
        <end position="44"/>
    </location>
</feature>
<feature type="compositionally biased region" description="Low complexity" evidence="2">
    <location>
        <begin position="21"/>
        <end position="33"/>
    </location>
</feature>
<feature type="active site" description="Proton donor/acceptor" evidence="1">
    <location>
        <position position="209"/>
    </location>
</feature>
<feature type="active site" description="Schiff-base intermediate with substrate" evidence="1">
    <location>
        <position position="237"/>
    </location>
</feature>
<feature type="binding site" evidence="1">
    <location>
        <position position="123"/>
    </location>
    <ligand>
        <name>pyruvate</name>
        <dbReference type="ChEBI" id="CHEBI:15361"/>
    </ligand>
</feature>
<feature type="binding site" evidence="1">
    <location>
        <position position="276"/>
    </location>
    <ligand>
        <name>pyruvate</name>
        <dbReference type="ChEBI" id="CHEBI:15361"/>
    </ligand>
</feature>
<feature type="site" description="Part of a proton relay during catalysis" evidence="1">
    <location>
        <position position="122"/>
    </location>
</feature>
<feature type="site" description="Part of a proton relay during catalysis" evidence="1">
    <location>
        <position position="185"/>
    </location>
</feature>
<comment type="function">
    <text evidence="1">Catalyzes the condensation of (S)-aspartate-beta-semialdehyde [(S)-ASA] and pyruvate to 4-hydroxy-tetrahydrodipicolinate (HTPA).</text>
</comment>
<comment type="catalytic activity">
    <reaction>
        <text>L-aspartate 4-semialdehyde + pyruvate = (2S,4S)-4-hydroxy-2,3,4,5-tetrahydrodipicolinate + H2O + H(+)</text>
        <dbReference type="Rhea" id="RHEA:34171"/>
        <dbReference type="ChEBI" id="CHEBI:15361"/>
        <dbReference type="ChEBI" id="CHEBI:15377"/>
        <dbReference type="ChEBI" id="CHEBI:15378"/>
        <dbReference type="ChEBI" id="CHEBI:67139"/>
        <dbReference type="ChEBI" id="CHEBI:537519"/>
        <dbReference type="EC" id="4.3.3.7"/>
    </reaction>
</comment>
<comment type="activity regulation">
    <text>Sensitive to lysine inhibition. This inhibition increase in an allosteric manner with increasing concentration of the inhibitor.</text>
</comment>
<comment type="pathway">
    <text>Amino-acid biosynthesis; L-lysine biosynthesis via DAP pathway; (S)-tetrahydrodipicolinate from L-aspartate: step 3/4.</text>
</comment>
<comment type="subunit">
    <text>Tetramer of modified subunits derived from two genes in different combinations.</text>
</comment>
<comment type="subcellular location">
    <subcellularLocation>
        <location>Plastid</location>
        <location>Chloroplast</location>
    </subcellularLocation>
</comment>
<comment type="similarity">
    <text evidence="4">Belongs to the DapA family.</text>
</comment>
<comment type="caution">
    <text evidence="4">Was originally thought to be a dihydrodipicolinate synthase (DHDPS), catalyzing the condensation of (S)-aspartate-beta-semialdehyde [(S)-ASA] and pyruvate to dihydrodipicolinate (DHDP). However, it was shown in E.coli that the product of the enzymatic reaction is not dihydrodipicolinate but in fact (4S)-4-hydroxy-2,3,4,5-tetrahydro-(2S)-dipicolinic acid (HTPA), and that the consecutive dehydration reaction leading to DHDP is not spontaneous but catalyzed by DapB.</text>
</comment>
<organism>
    <name type="scientific">Zea mays</name>
    <name type="common">Maize</name>
    <dbReference type="NCBI Taxonomy" id="4577"/>
    <lineage>
        <taxon>Eukaryota</taxon>
        <taxon>Viridiplantae</taxon>
        <taxon>Streptophyta</taxon>
        <taxon>Embryophyta</taxon>
        <taxon>Tracheophyta</taxon>
        <taxon>Spermatophyta</taxon>
        <taxon>Magnoliopsida</taxon>
        <taxon>Liliopsida</taxon>
        <taxon>Poales</taxon>
        <taxon>Poaceae</taxon>
        <taxon>PACMAD clade</taxon>
        <taxon>Panicoideae</taxon>
        <taxon>Andropogonodae</taxon>
        <taxon>Andropogoneae</taxon>
        <taxon>Tripsacinae</taxon>
        <taxon>Zea</taxon>
    </lineage>
</organism>
<reference key="1">
    <citation type="journal article" date="1991" name="Mol. Gen. Genet.">
        <title>Direct genetic selection of a maize cDNA for dihydrodipicolinate synthase in an Escherichia coli dapA-auxotroph.</title>
        <authorList>
            <person name="Frisch D.A."/>
            <person name="Tommey A.M."/>
            <person name="Somers D.A."/>
            <person name="Gengenbach B.G."/>
        </authorList>
    </citation>
    <scope>NUCLEOTIDE SEQUENCE [MRNA]</scope>
    <scope>PROTEIN SEQUENCE OF 55-62</scope>
    <source>
        <strain>cv. Black Mexican Sweet</strain>
    </source>
</reference>
<proteinExistence type="evidence at protein level"/>
<name>DAPA_MAIZE</name>
<accession>P26259</accession>
<keyword id="KW-0021">Allosteric enzyme</keyword>
<keyword id="KW-0028">Amino-acid biosynthesis</keyword>
<keyword id="KW-0150">Chloroplast</keyword>
<keyword id="KW-0220">Diaminopimelate biosynthesis</keyword>
<keyword id="KW-0903">Direct protein sequencing</keyword>
<keyword id="KW-0456">Lyase</keyword>
<keyword id="KW-0457">Lysine biosynthesis</keyword>
<keyword id="KW-0934">Plastid</keyword>
<keyword id="KW-1185">Reference proteome</keyword>
<keyword id="KW-0704">Schiff base</keyword>
<keyword id="KW-0809">Transit peptide</keyword>
<protein>
    <recommendedName>
        <fullName>4-hydroxy-tetrahydrodipicolinate synthase, chloroplastic</fullName>
        <shortName>HTPA synthase</shortName>
        <ecNumber>4.3.3.7</ecNumber>
    </recommendedName>
</protein>
<dbReference type="EC" id="4.3.3.7"/>
<dbReference type="EMBL" id="X52850">
    <property type="protein sequence ID" value="CAA37038.1"/>
    <property type="status" value="ALT_SEQ"/>
    <property type="molecule type" value="mRNA"/>
</dbReference>
<dbReference type="PIR" id="S16560">
    <property type="entry name" value="WZZMP"/>
</dbReference>
<dbReference type="RefSeq" id="NP_001105425.1">
    <property type="nucleotide sequence ID" value="NM_001111955.1"/>
</dbReference>
<dbReference type="SMR" id="P26259"/>
<dbReference type="STRING" id="4577.P26259"/>
<dbReference type="PaxDb" id="4577-GRMZM2G027835_P01"/>
<dbReference type="GeneID" id="542379"/>
<dbReference type="KEGG" id="zma:542379"/>
<dbReference type="MaizeGDB" id="60647"/>
<dbReference type="eggNOG" id="ENOG502QQ8M">
    <property type="taxonomic scope" value="Eukaryota"/>
</dbReference>
<dbReference type="InParanoid" id="P26259"/>
<dbReference type="OrthoDB" id="191315at2759"/>
<dbReference type="SABIO-RK" id="P26259"/>
<dbReference type="UniPathway" id="UPA00034">
    <property type="reaction ID" value="UER00017"/>
</dbReference>
<dbReference type="Proteomes" id="UP000007305">
    <property type="component" value="Unplaced"/>
</dbReference>
<dbReference type="ExpressionAtlas" id="P26259">
    <property type="expression patterns" value="baseline and differential"/>
</dbReference>
<dbReference type="GO" id="GO:0009507">
    <property type="term" value="C:chloroplast"/>
    <property type="evidence" value="ECO:0007669"/>
    <property type="project" value="UniProtKB-SubCell"/>
</dbReference>
<dbReference type="GO" id="GO:0008840">
    <property type="term" value="F:4-hydroxy-tetrahydrodipicolinate synthase activity"/>
    <property type="evidence" value="ECO:0000318"/>
    <property type="project" value="GO_Central"/>
</dbReference>
<dbReference type="GO" id="GO:0019877">
    <property type="term" value="P:diaminopimelate biosynthetic process"/>
    <property type="evidence" value="ECO:0007669"/>
    <property type="project" value="UniProtKB-KW"/>
</dbReference>
<dbReference type="GO" id="GO:0009089">
    <property type="term" value="P:lysine biosynthetic process via diaminopimelate"/>
    <property type="evidence" value="ECO:0007669"/>
    <property type="project" value="UniProtKB-UniPathway"/>
</dbReference>
<dbReference type="CDD" id="cd00950">
    <property type="entry name" value="DHDPS"/>
    <property type="match status" value="1"/>
</dbReference>
<dbReference type="Gene3D" id="3.20.20.70">
    <property type="entry name" value="Aldolase class I"/>
    <property type="match status" value="1"/>
</dbReference>
<dbReference type="InterPro" id="IPR013785">
    <property type="entry name" value="Aldolase_TIM"/>
</dbReference>
<dbReference type="InterPro" id="IPR005263">
    <property type="entry name" value="DapA"/>
</dbReference>
<dbReference type="InterPro" id="IPR002220">
    <property type="entry name" value="DapA-like"/>
</dbReference>
<dbReference type="InterPro" id="IPR020625">
    <property type="entry name" value="Schiff_base-form_aldolases_AS"/>
</dbReference>
<dbReference type="InterPro" id="IPR020624">
    <property type="entry name" value="Schiff_base-form_aldolases_CS"/>
</dbReference>
<dbReference type="NCBIfam" id="TIGR00674">
    <property type="entry name" value="dapA"/>
    <property type="match status" value="1"/>
</dbReference>
<dbReference type="PANTHER" id="PTHR12128:SF57">
    <property type="entry name" value="4-HYDROXY-TETRAHYDRODIPICOLINATE SYNTHASE, CHLOROPLASTIC"/>
    <property type="match status" value="1"/>
</dbReference>
<dbReference type="PANTHER" id="PTHR12128">
    <property type="entry name" value="DIHYDRODIPICOLINATE SYNTHASE"/>
    <property type="match status" value="1"/>
</dbReference>
<dbReference type="Pfam" id="PF00701">
    <property type="entry name" value="DHDPS"/>
    <property type="match status" value="1"/>
</dbReference>
<dbReference type="PRINTS" id="PR00146">
    <property type="entry name" value="DHPICSNTHASE"/>
</dbReference>
<dbReference type="SMART" id="SM01130">
    <property type="entry name" value="DHDPS"/>
    <property type="match status" value="1"/>
</dbReference>
<dbReference type="SUPFAM" id="SSF51569">
    <property type="entry name" value="Aldolase"/>
    <property type="match status" value="1"/>
</dbReference>
<dbReference type="PROSITE" id="PS00665">
    <property type="entry name" value="DHDPS_1"/>
    <property type="match status" value="1"/>
</dbReference>
<dbReference type="PROSITE" id="PS00666">
    <property type="entry name" value="DHDPS_2"/>
    <property type="match status" value="1"/>
</dbReference>
<sequence>MISPTNLLPARKITPVSNGGAATASPSSPSVAARPRRLPSGLQSVTGRGKVSLAAITLDDYLPMRSTEVKNRTSTDDITRLRLITAVKTPYLPDGRFDLEAYDSLINMQIEGGAEGVIVGGTTGEGHLMSWDEHIMLIGHTVNCFGSRIKVIGNTGSNSTREAVHATEQGFAVGMHAALHINPYYGKTSAEGMISHFEAVLPMGPTIIYNVPSRSAQDIPPEVILAISGYTNMAGVKECVGHERVKHYADKGITIWSGNDDECHDSKWKHGATGVISVTSNLVPGLMHSLMYKGENATLNEKLSPLMKWLFCQPNPIALNTALAQLGVARPVFRLPYVPLPLEKRAEFVRIVESIGRENFVGQKEARVLDDDDFVLISRY</sequence>
<evidence type="ECO:0000250" key="1"/>
<evidence type="ECO:0000256" key="2">
    <source>
        <dbReference type="SAM" id="MobiDB-lite"/>
    </source>
</evidence>
<evidence type="ECO:0000269" key="3">
    <source>
    </source>
</evidence>
<evidence type="ECO:0000305" key="4"/>